<accession>Q1QA28</accession>
<proteinExistence type="inferred from homology"/>
<feature type="signal peptide" evidence="1">
    <location>
        <begin position="1"/>
        <end position="27"/>
    </location>
</feature>
<feature type="chain" id="PRO_5000118294" description="LPS-assembly protein LptD">
    <location>
        <begin position="28"/>
        <end position="997"/>
    </location>
</feature>
<evidence type="ECO:0000255" key="1">
    <source>
        <dbReference type="HAMAP-Rule" id="MF_01411"/>
    </source>
</evidence>
<dbReference type="EMBL" id="CP000323">
    <property type="protein sequence ID" value="ABE75475.1"/>
    <property type="molecule type" value="Genomic_DNA"/>
</dbReference>
<dbReference type="RefSeq" id="WP_011514023.1">
    <property type="nucleotide sequence ID" value="NC_007969.1"/>
</dbReference>
<dbReference type="SMR" id="Q1QA28"/>
<dbReference type="STRING" id="335284.Pcryo_1698"/>
<dbReference type="KEGG" id="pcr:Pcryo_1698"/>
<dbReference type="eggNOG" id="COG1452">
    <property type="taxonomic scope" value="Bacteria"/>
</dbReference>
<dbReference type="HOGENOM" id="CLU_009039_1_0_6"/>
<dbReference type="Proteomes" id="UP000002425">
    <property type="component" value="Chromosome"/>
</dbReference>
<dbReference type="GO" id="GO:0009279">
    <property type="term" value="C:cell outer membrane"/>
    <property type="evidence" value="ECO:0007669"/>
    <property type="project" value="UniProtKB-SubCell"/>
</dbReference>
<dbReference type="GO" id="GO:1990351">
    <property type="term" value="C:transporter complex"/>
    <property type="evidence" value="ECO:0007669"/>
    <property type="project" value="TreeGrafter"/>
</dbReference>
<dbReference type="GO" id="GO:0043165">
    <property type="term" value="P:Gram-negative-bacterium-type cell outer membrane assembly"/>
    <property type="evidence" value="ECO:0007669"/>
    <property type="project" value="UniProtKB-UniRule"/>
</dbReference>
<dbReference type="GO" id="GO:0015920">
    <property type="term" value="P:lipopolysaccharide transport"/>
    <property type="evidence" value="ECO:0007669"/>
    <property type="project" value="InterPro"/>
</dbReference>
<dbReference type="Gene3D" id="2.60.450.10">
    <property type="entry name" value="Lipopolysaccharide (LPS) transport protein A like domain"/>
    <property type="match status" value="1"/>
</dbReference>
<dbReference type="HAMAP" id="MF_01411">
    <property type="entry name" value="LPS_assembly_LptD"/>
    <property type="match status" value="1"/>
</dbReference>
<dbReference type="InterPro" id="IPR020889">
    <property type="entry name" value="LipoPS_assembly_LptD"/>
</dbReference>
<dbReference type="InterPro" id="IPR050218">
    <property type="entry name" value="LptD"/>
</dbReference>
<dbReference type="InterPro" id="IPR007543">
    <property type="entry name" value="LptD_C"/>
</dbReference>
<dbReference type="PANTHER" id="PTHR30189">
    <property type="entry name" value="LPS-ASSEMBLY PROTEIN"/>
    <property type="match status" value="1"/>
</dbReference>
<dbReference type="PANTHER" id="PTHR30189:SF1">
    <property type="entry name" value="LPS-ASSEMBLY PROTEIN LPTD"/>
    <property type="match status" value="1"/>
</dbReference>
<dbReference type="Pfam" id="PF04453">
    <property type="entry name" value="LptD"/>
    <property type="match status" value="1"/>
</dbReference>
<protein>
    <recommendedName>
        <fullName evidence="1">LPS-assembly protein LptD</fullName>
    </recommendedName>
</protein>
<gene>
    <name evidence="1" type="primary">lptD</name>
    <name type="synonym">imp</name>
    <name type="synonym">ostA</name>
    <name type="ordered locus">Pcryo_1698</name>
</gene>
<keyword id="KW-0998">Cell outer membrane</keyword>
<keyword id="KW-0472">Membrane</keyword>
<keyword id="KW-0732">Signal</keyword>
<organism>
    <name type="scientific">Psychrobacter cryohalolentis (strain ATCC BAA-1226 / DSM 17306 / VKM B-2378 / K5)</name>
    <dbReference type="NCBI Taxonomy" id="335284"/>
    <lineage>
        <taxon>Bacteria</taxon>
        <taxon>Pseudomonadati</taxon>
        <taxon>Pseudomonadota</taxon>
        <taxon>Gammaproteobacteria</taxon>
        <taxon>Moraxellales</taxon>
        <taxon>Moraxellaceae</taxon>
        <taxon>Psychrobacter</taxon>
    </lineage>
</organism>
<comment type="function">
    <text evidence="1">Together with LptE, is involved in the assembly of lipopolysaccharide (LPS) at the surface of the outer membrane.</text>
</comment>
<comment type="subunit">
    <text evidence="1">Component of the lipopolysaccharide transport and assembly complex. Interacts with LptE and LptA.</text>
</comment>
<comment type="subcellular location">
    <subcellularLocation>
        <location evidence="1">Cell outer membrane</location>
    </subcellularLocation>
</comment>
<comment type="similarity">
    <text evidence="1">Belongs to the LptD family.</text>
</comment>
<name>LPTD_PSYCK</name>
<sequence>MLYSPLYQSIRLILFGALGLSSLTVSAAINQTDSMMPEPLVTDSSNQYADDVATDAGFNNEINNQDISYQSDSQQSAAYKKASLSSDATLSNDAAVNNNNITAINDRTKTSQDSRVAPVNTSNAAKAGNRRIDTNDESIQESLKRLAEFYELTPDTNVATSNNTGTSVNDEQNNIQNSLTPVTTNIPTVGSNLRLLPHTVDSAARCEGQWVYPKKNPNYQRAVNEASASSGQPAPNLNGLPNNQAPLFAESDYGYYDNVDYAELSGNVIIDQGTQHIEAEKIVLDLSNGVAAAQGKVMFTDQATGNVSVNGAQDRTQQNGKTSLTDKATQGGLIGVADNLNYNTETGQSTATNVAFASVELQAHGYAKRLNRPNESQYELDEVMYSTCPPTNRKWQFDAKSIDLDTETGRGEAYNTTFRIADVPVFYLPYFNFPIDSRRGSGFLLPNASISSENGLEIDVPYYFNLAPNYDATLSTHIYTTRNPMLSGEFRYLTENYGEGIFNGSYLPNDKEYDGEDRRSLFYDHYWSSTSIPRLSGEAKYSYVSDADYLNDFDTLGLSDNTLNLPRRAQLNYYNDYVDGELKVETFQTLDALNNNGQMLQDKDKPYSRLPQLKLDYRLPWAKHFDITGVSDSAYFKKSIDDGSENEKSGTRFYNKLSASYPMENSWGYIKPKLSLQHLFTTYDEDSLVDNSLDKDDGSQSVFVPQASIDAGLHFYQAGSPFGAFDDTLGGYRLLSPRLKYTYSPYRDQNDIPNFNTRIASINYEQLFSDSWFLGHDRLQDLHAFTPGINYRYIDATGVTRFDGSIGEQFYLDDGRVTLDNTKPVFTSSSSGLVWDTSTQPYNNVWVDVSGALTNSYDLNYITTELRYQPSDRSLFNVGFIKRQRDENTNQLPLSALTASAVFPINNNWRVLAQGQYDYNRNQMLDSLIGIDYEDCCFGFAVYGRRYYNDLNIAEKPTQAIMAEVRLSGLGSGSSRLTRLLADKVLGFEPVQNAWKD</sequence>
<reference key="1">
    <citation type="submission" date="2006-03" db="EMBL/GenBank/DDBJ databases">
        <title>Complete sequence of chromosome of Psychrobacter cryohalolentis K5.</title>
        <authorList>
            <consortium name="US DOE Joint Genome Institute"/>
            <person name="Copeland A."/>
            <person name="Lucas S."/>
            <person name="Lapidus A."/>
            <person name="Barry K."/>
            <person name="Detter J.C."/>
            <person name="Glavina T."/>
            <person name="Hammon N."/>
            <person name="Israni S."/>
            <person name="Dalin E."/>
            <person name="Tice H."/>
            <person name="Pitluck S."/>
            <person name="Brettin T."/>
            <person name="Bruce D."/>
            <person name="Han C."/>
            <person name="Tapia R."/>
            <person name="Sims D.R."/>
            <person name="Gilna P."/>
            <person name="Schmutz J."/>
            <person name="Larimer F."/>
            <person name="Land M."/>
            <person name="Hauser L."/>
            <person name="Kyrpides N."/>
            <person name="Kim E."/>
            <person name="Richardson P."/>
        </authorList>
    </citation>
    <scope>NUCLEOTIDE SEQUENCE [LARGE SCALE GENOMIC DNA]</scope>
    <source>
        <strain>ATCC BAA-1226 / DSM 17306 / VKM B-2378 / K5</strain>
    </source>
</reference>